<keyword id="KW-0963">Cytoplasm</keyword>
<keyword id="KW-0413">Isomerase</keyword>
<keyword id="KW-0464">Manganese</keyword>
<keyword id="KW-0479">Metal-binding</keyword>
<keyword id="KW-1185">Reference proteome</keyword>
<gene>
    <name evidence="1" type="primary">deoB</name>
    <name type="ordered locus">RHE_CH00198</name>
</gene>
<proteinExistence type="inferred from homology"/>
<organism>
    <name type="scientific">Rhizobium etli (strain ATCC 51251 / DSM 11541 / JCM 21823 / NBRC 15573 / CFN 42)</name>
    <dbReference type="NCBI Taxonomy" id="347834"/>
    <lineage>
        <taxon>Bacteria</taxon>
        <taxon>Pseudomonadati</taxon>
        <taxon>Pseudomonadota</taxon>
        <taxon>Alphaproteobacteria</taxon>
        <taxon>Hyphomicrobiales</taxon>
        <taxon>Rhizobiaceae</taxon>
        <taxon>Rhizobium/Agrobacterium group</taxon>
        <taxon>Rhizobium</taxon>
    </lineage>
</organism>
<name>DEOB_RHIEC</name>
<evidence type="ECO:0000255" key="1">
    <source>
        <dbReference type="HAMAP-Rule" id="MF_00740"/>
    </source>
</evidence>
<evidence type="ECO:0000305" key="2"/>
<dbReference type="EC" id="5.4.2.7" evidence="1"/>
<dbReference type="EMBL" id="CP000133">
    <property type="protein sequence ID" value="ABC89022.1"/>
    <property type="status" value="ALT_INIT"/>
    <property type="molecule type" value="Genomic_DNA"/>
</dbReference>
<dbReference type="RefSeq" id="WP_042117715.1">
    <property type="nucleotide sequence ID" value="NC_007761.1"/>
</dbReference>
<dbReference type="SMR" id="Q2KDR4"/>
<dbReference type="KEGG" id="ret:RHE_CH00198"/>
<dbReference type="eggNOG" id="COG1015">
    <property type="taxonomic scope" value="Bacteria"/>
</dbReference>
<dbReference type="HOGENOM" id="CLU_053861_0_0_5"/>
<dbReference type="OrthoDB" id="9769930at2"/>
<dbReference type="UniPathway" id="UPA00002">
    <property type="reaction ID" value="UER00467"/>
</dbReference>
<dbReference type="Proteomes" id="UP000001936">
    <property type="component" value="Chromosome"/>
</dbReference>
<dbReference type="GO" id="GO:0005829">
    <property type="term" value="C:cytosol"/>
    <property type="evidence" value="ECO:0007669"/>
    <property type="project" value="TreeGrafter"/>
</dbReference>
<dbReference type="GO" id="GO:0000287">
    <property type="term" value="F:magnesium ion binding"/>
    <property type="evidence" value="ECO:0007669"/>
    <property type="project" value="InterPro"/>
</dbReference>
<dbReference type="GO" id="GO:0030145">
    <property type="term" value="F:manganese ion binding"/>
    <property type="evidence" value="ECO:0007669"/>
    <property type="project" value="UniProtKB-UniRule"/>
</dbReference>
<dbReference type="GO" id="GO:0008973">
    <property type="term" value="F:phosphopentomutase activity"/>
    <property type="evidence" value="ECO:0007669"/>
    <property type="project" value="UniProtKB-UniRule"/>
</dbReference>
<dbReference type="GO" id="GO:0006018">
    <property type="term" value="P:2-deoxyribose 1-phosphate catabolic process"/>
    <property type="evidence" value="ECO:0007669"/>
    <property type="project" value="UniProtKB-UniRule"/>
</dbReference>
<dbReference type="GO" id="GO:0006015">
    <property type="term" value="P:5-phosphoribose 1-diphosphate biosynthetic process"/>
    <property type="evidence" value="ECO:0007669"/>
    <property type="project" value="UniProtKB-UniPathway"/>
</dbReference>
<dbReference type="GO" id="GO:0043094">
    <property type="term" value="P:metabolic compound salvage"/>
    <property type="evidence" value="ECO:0007669"/>
    <property type="project" value="InterPro"/>
</dbReference>
<dbReference type="GO" id="GO:0009117">
    <property type="term" value="P:nucleotide metabolic process"/>
    <property type="evidence" value="ECO:0007669"/>
    <property type="project" value="InterPro"/>
</dbReference>
<dbReference type="CDD" id="cd16009">
    <property type="entry name" value="PPM"/>
    <property type="match status" value="1"/>
</dbReference>
<dbReference type="Gene3D" id="3.40.720.10">
    <property type="entry name" value="Alkaline Phosphatase, subunit A"/>
    <property type="match status" value="1"/>
</dbReference>
<dbReference type="Gene3D" id="3.30.70.1250">
    <property type="entry name" value="Phosphopentomutase"/>
    <property type="match status" value="1"/>
</dbReference>
<dbReference type="HAMAP" id="MF_00740">
    <property type="entry name" value="Phosphopentomut"/>
    <property type="match status" value="1"/>
</dbReference>
<dbReference type="InterPro" id="IPR017850">
    <property type="entry name" value="Alkaline_phosphatase_core_sf"/>
</dbReference>
<dbReference type="InterPro" id="IPR010045">
    <property type="entry name" value="DeoB"/>
</dbReference>
<dbReference type="InterPro" id="IPR006124">
    <property type="entry name" value="Metalloenzyme"/>
</dbReference>
<dbReference type="InterPro" id="IPR024052">
    <property type="entry name" value="Phosphopentomutase_DeoB_cap_sf"/>
</dbReference>
<dbReference type="NCBIfam" id="TIGR01696">
    <property type="entry name" value="deoB"/>
    <property type="match status" value="1"/>
</dbReference>
<dbReference type="NCBIfam" id="NF003766">
    <property type="entry name" value="PRK05362.1"/>
    <property type="match status" value="1"/>
</dbReference>
<dbReference type="PANTHER" id="PTHR21110">
    <property type="entry name" value="PHOSPHOPENTOMUTASE"/>
    <property type="match status" value="1"/>
</dbReference>
<dbReference type="PANTHER" id="PTHR21110:SF0">
    <property type="entry name" value="PHOSPHOPENTOMUTASE"/>
    <property type="match status" value="1"/>
</dbReference>
<dbReference type="Pfam" id="PF01676">
    <property type="entry name" value="Metalloenzyme"/>
    <property type="match status" value="1"/>
</dbReference>
<dbReference type="PIRSF" id="PIRSF001491">
    <property type="entry name" value="Ppentomutase"/>
    <property type="match status" value="1"/>
</dbReference>
<dbReference type="SUPFAM" id="SSF53649">
    <property type="entry name" value="Alkaline phosphatase-like"/>
    <property type="match status" value="1"/>
</dbReference>
<dbReference type="SUPFAM" id="SSF143856">
    <property type="entry name" value="DeoB insert domain-like"/>
    <property type="match status" value="1"/>
</dbReference>
<accession>Q2KDR4</accession>
<reference key="1">
    <citation type="journal article" date="2006" name="Proc. Natl. Acad. Sci. U.S.A.">
        <title>The partitioned Rhizobium etli genome: genetic and metabolic redundancy in seven interacting replicons.</title>
        <authorList>
            <person name="Gonzalez V."/>
            <person name="Santamaria R.I."/>
            <person name="Bustos P."/>
            <person name="Hernandez-Gonzalez I."/>
            <person name="Medrano-Soto A."/>
            <person name="Moreno-Hagelsieb G."/>
            <person name="Janga S.C."/>
            <person name="Ramirez M.A."/>
            <person name="Jimenez-Jacinto V."/>
            <person name="Collado-Vides J."/>
            <person name="Davila G."/>
        </authorList>
    </citation>
    <scope>NUCLEOTIDE SEQUENCE [LARGE SCALE GENOMIC DNA]</scope>
    <source>
        <strain>ATCC 51251 / DSM 11541 / JCM 21823 / NBRC 15573 / CFN 42</strain>
    </source>
</reference>
<sequence>MARAFLFVLDSFGVGGAPDAAAYGDEGADTLGHIAEFCAAGAGDRAGLRSGPLSLPNMSELGLMHIARAASGQFPAGMPLPEKVYGVYGTANEISRGKDTPSGHWEIAGTPVNFDWGYFPTEGDAFPPELIEALCRAGDVPGILGNCHASGTEIIARLGEEHIRTGKPICYTSSDSVFQVAAQEAHFGLDRLLTFCRIARGLLDPYNIGRIIARPFIGQSASTFQRTGNRRDFSVLPPEPTLLDRLLQHGRHVHAVGKIGDIFAHQGISRVIKATGNEALMDASLSAIDAAEDGDLVFTNFVDFDMNYGHRRDVPGYAAALEAFDARLPEVHKKLKPGDLVVLTADHGCDPTWRGTDHTRERVPIIAFGPGIRSRSIGVRRTYADIGESIARHLGIPAGPHGRSFL</sequence>
<protein>
    <recommendedName>
        <fullName evidence="1">Phosphopentomutase</fullName>
        <ecNumber evidence="1">5.4.2.7</ecNumber>
    </recommendedName>
    <alternativeName>
        <fullName evidence="1">Phosphodeoxyribomutase</fullName>
    </alternativeName>
</protein>
<comment type="function">
    <text evidence="1">Isomerase that catalyzes the conversion of deoxy-ribose 1-phosphate (dRib-1-P) and ribose 1-phosphate (Rib-1-P) to deoxy-ribose 5-phosphate (dRib-5-P) and ribose 5-phosphate (Rib-5-P), respectively.</text>
</comment>
<comment type="catalytic activity">
    <reaction evidence="1">
        <text>2-deoxy-alpha-D-ribose 1-phosphate = 2-deoxy-D-ribose 5-phosphate</text>
        <dbReference type="Rhea" id="RHEA:27658"/>
        <dbReference type="ChEBI" id="CHEBI:57259"/>
        <dbReference type="ChEBI" id="CHEBI:62877"/>
        <dbReference type="EC" id="5.4.2.7"/>
    </reaction>
</comment>
<comment type="catalytic activity">
    <reaction evidence="1">
        <text>alpha-D-ribose 1-phosphate = D-ribose 5-phosphate</text>
        <dbReference type="Rhea" id="RHEA:18793"/>
        <dbReference type="ChEBI" id="CHEBI:57720"/>
        <dbReference type="ChEBI" id="CHEBI:78346"/>
        <dbReference type="EC" id="5.4.2.7"/>
    </reaction>
</comment>
<comment type="cofactor">
    <cofactor evidence="1">
        <name>Mn(2+)</name>
        <dbReference type="ChEBI" id="CHEBI:29035"/>
    </cofactor>
    <text evidence="1">Binds 2 manganese ions.</text>
</comment>
<comment type="pathway">
    <text evidence="1">Carbohydrate degradation; 2-deoxy-D-ribose 1-phosphate degradation; D-glyceraldehyde 3-phosphate and acetaldehyde from 2-deoxy-alpha-D-ribose 1-phosphate: step 1/2.</text>
</comment>
<comment type="subcellular location">
    <subcellularLocation>
        <location evidence="1">Cytoplasm</location>
    </subcellularLocation>
</comment>
<comment type="similarity">
    <text evidence="1">Belongs to the phosphopentomutase family.</text>
</comment>
<comment type="sequence caution" evidence="2">
    <conflict type="erroneous initiation">
        <sequence resource="EMBL-CDS" id="ABC89022"/>
    </conflict>
</comment>
<feature type="chain" id="PRO_0000258299" description="Phosphopentomutase">
    <location>
        <begin position="1"/>
        <end position="406"/>
    </location>
</feature>
<feature type="binding site" evidence="1">
    <location>
        <position position="10"/>
    </location>
    <ligand>
        <name>Mn(2+)</name>
        <dbReference type="ChEBI" id="CHEBI:29035"/>
        <label>1</label>
    </ligand>
</feature>
<feature type="binding site" evidence="1">
    <location>
        <position position="305"/>
    </location>
    <ligand>
        <name>Mn(2+)</name>
        <dbReference type="ChEBI" id="CHEBI:29035"/>
        <label>2</label>
    </ligand>
</feature>
<feature type="binding site" evidence="1">
    <location>
        <position position="310"/>
    </location>
    <ligand>
        <name>Mn(2+)</name>
        <dbReference type="ChEBI" id="CHEBI:29035"/>
        <label>2</label>
    </ligand>
</feature>
<feature type="binding site" evidence="1">
    <location>
        <position position="346"/>
    </location>
    <ligand>
        <name>Mn(2+)</name>
        <dbReference type="ChEBI" id="CHEBI:29035"/>
        <label>1</label>
    </ligand>
</feature>
<feature type="binding site" evidence="1">
    <location>
        <position position="347"/>
    </location>
    <ligand>
        <name>Mn(2+)</name>
        <dbReference type="ChEBI" id="CHEBI:29035"/>
        <label>1</label>
    </ligand>
</feature>
<feature type="binding site" evidence="1">
    <location>
        <position position="358"/>
    </location>
    <ligand>
        <name>Mn(2+)</name>
        <dbReference type="ChEBI" id="CHEBI:29035"/>
        <label>2</label>
    </ligand>
</feature>